<evidence type="ECO:0000256" key="1">
    <source>
        <dbReference type="SAM" id="MobiDB-lite"/>
    </source>
</evidence>
<evidence type="ECO:0000305" key="2"/>
<evidence type="ECO:0000312" key="3">
    <source>
        <dbReference type="HGNC" id="HGNC:26436"/>
    </source>
</evidence>
<reference key="1">
    <citation type="journal article" date="2004" name="Nat. Genet.">
        <title>Complete sequencing and characterization of 21,243 full-length human cDNAs.</title>
        <authorList>
            <person name="Ota T."/>
            <person name="Suzuki Y."/>
            <person name="Nishikawa T."/>
            <person name="Otsuki T."/>
            <person name="Sugiyama T."/>
            <person name="Irie R."/>
            <person name="Wakamatsu A."/>
            <person name="Hayashi K."/>
            <person name="Sato H."/>
            <person name="Nagai K."/>
            <person name="Kimura K."/>
            <person name="Makita H."/>
            <person name="Sekine M."/>
            <person name="Obayashi M."/>
            <person name="Nishi T."/>
            <person name="Shibahara T."/>
            <person name="Tanaka T."/>
            <person name="Ishii S."/>
            <person name="Yamamoto J."/>
            <person name="Saito K."/>
            <person name="Kawai Y."/>
            <person name="Isono Y."/>
            <person name="Nakamura Y."/>
            <person name="Nagahari K."/>
            <person name="Murakami K."/>
            <person name="Yasuda T."/>
            <person name="Iwayanagi T."/>
            <person name="Wagatsuma M."/>
            <person name="Shiratori A."/>
            <person name="Sudo H."/>
            <person name="Hosoiri T."/>
            <person name="Kaku Y."/>
            <person name="Kodaira H."/>
            <person name="Kondo H."/>
            <person name="Sugawara M."/>
            <person name="Takahashi M."/>
            <person name="Kanda K."/>
            <person name="Yokoi T."/>
            <person name="Furuya T."/>
            <person name="Kikkawa E."/>
            <person name="Omura Y."/>
            <person name="Abe K."/>
            <person name="Kamihara K."/>
            <person name="Katsuta N."/>
            <person name="Sato K."/>
            <person name="Tanikawa M."/>
            <person name="Yamazaki M."/>
            <person name="Ninomiya K."/>
            <person name="Ishibashi T."/>
            <person name="Yamashita H."/>
            <person name="Murakawa K."/>
            <person name="Fujimori K."/>
            <person name="Tanai H."/>
            <person name="Kimata M."/>
            <person name="Watanabe M."/>
            <person name="Hiraoka S."/>
            <person name="Chiba Y."/>
            <person name="Ishida S."/>
            <person name="Ono Y."/>
            <person name="Takiguchi S."/>
            <person name="Watanabe S."/>
            <person name="Yosida M."/>
            <person name="Hotuta T."/>
            <person name="Kusano J."/>
            <person name="Kanehori K."/>
            <person name="Takahashi-Fujii A."/>
            <person name="Hara H."/>
            <person name="Tanase T.-O."/>
            <person name="Nomura Y."/>
            <person name="Togiya S."/>
            <person name="Komai F."/>
            <person name="Hara R."/>
            <person name="Takeuchi K."/>
            <person name="Arita M."/>
            <person name="Imose N."/>
            <person name="Musashino K."/>
            <person name="Yuuki H."/>
            <person name="Oshima A."/>
            <person name="Sasaki N."/>
            <person name="Aotsuka S."/>
            <person name="Yoshikawa Y."/>
            <person name="Matsunawa H."/>
            <person name="Ichihara T."/>
            <person name="Shiohata N."/>
            <person name="Sano S."/>
            <person name="Moriya S."/>
            <person name="Momiyama H."/>
            <person name="Satoh N."/>
            <person name="Takami S."/>
            <person name="Terashima Y."/>
            <person name="Suzuki O."/>
            <person name="Nakagawa S."/>
            <person name="Senoh A."/>
            <person name="Mizoguchi H."/>
            <person name="Goto Y."/>
            <person name="Shimizu F."/>
            <person name="Wakebe H."/>
            <person name="Hishigaki H."/>
            <person name="Watanabe T."/>
            <person name="Sugiyama A."/>
            <person name="Takemoto M."/>
            <person name="Kawakami B."/>
            <person name="Yamazaki M."/>
            <person name="Watanabe K."/>
            <person name="Kumagai A."/>
            <person name="Itakura S."/>
            <person name="Fukuzumi Y."/>
            <person name="Fujimori Y."/>
            <person name="Komiyama M."/>
            <person name="Tashiro H."/>
            <person name="Tanigami A."/>
            <person name="Fujiwara T."/>
            <person name="Ono T."/>
            <person name="Yamada K."/>
            <person name="Fujii Y."/>
            <person name="Ozaki K."/>
            <person name="Hirao M."/>
            <person name="Ohmori Y."/>
            <person name="Kawabata A."/>
            <person name="Hikiji T."/>
            <person name="Kobatake N."/>
            <person name="Inagaki H."/>
            <person name="Ikema Y."/>
            <person name="Okamoto S."/>
            <person name="Okitani R."/>
            <person name="Kawakami T."/>
            <person name="Noguchi S."/>
            <person name="Itoh T."/>
            <person name="Shigeta K."/>
            <person name="Senba T."/>
            <person name="Matsumura K."/>
            <person name="Nakajima Y."/>
            <person name="Mizuno T."/>
            <person name="Morinaga M."/>
            <person name="Sasaki M."/>
            <person name="Togashi T."/>
            <person name="Oyama M."/>
            <person name="Hata H."/>
            <person name="Watanabe M."/>
            <person name="Komatsu T."/>
            <person name="Mizushima-Sugano J."/>
            <person name="Satoh T."/>
            <person name="Shirai Y."/>
            <person name="Takahashi Y."/>
            <person name="Nakagawa K."/>
            <person name="Okumura K."/>
            <person name="Nagase T."/>
            <person name="Nomura N."/>
            <person name="Kikuchi H."/>
            <person name="Masuho Y."/>
            <person name="Yamashita R."/>
            <person name="Nakai K."/>
            <person name="Yada T."/>
            <person name="Nakamura Y."/>
            <person name="Ohara O."/>
            <person name="Isogai T."/>
            <person name="Sugano S."/>
        </authorList>
    </citation>
    <scope>NUCLEOTIDE SEQUENCE [LARGE SCALE MRNA]</scope>
    <source>
        <tissue>Kidney</tissue>
    </source>
</reference>
<reference key="2">
    <citation type="journal article" date="2004" name="Nature">
        <title>DNA sequence and analysis of human chromosome 9.</title>
        <authorList>
            <person name="Humphray S.J."/>
            <person name="Oliver K."/>
            <person name="Hunt A.R."/>
            <person name="Plumb R.W."/>
            <person name="Loveland J.E."/>
            <person name="Howe K.L."/>
            <person name="Andrews T.D."/>
            <person name="Searle S."/>
            <person name="Hunt S.E."/>
            <person name="Scott C.E."/>
            <person name="Jones M.C."/>
            <person name="Ainscough R."/>
            <person name="Almeida J.P."/>
            <person name="Ambrose K.D."/>
            <person name="Ashwell R.I.S."/>
            <person name="Babbage A.K."/>
            <person name="Babbage S."/>
            <person name="Bagguley C.L."/>
            <person name="Bailey J."/>
            <person name="Banerjee R."/>
            <person name="Barker D.J."/>
            <person name="Barlow K.F."/>
            <person name="Bates K."/>
            <person name="Beasley H."/>
            <person name="Beasley O."/>
            <person name="Bird C.P."/>
            <person name="Bray-Allen S."/>
            <person name="Brown A.J."/>
            <person name="Brown J.Y."/>
            <person name="Burford D."/>
            <person name="Burrill W."/>
            <person name="Burton J."/>
            <person name="Carder C."/>
            <person name="Carter N.P."/>
            <person name="Chapman J.C."/>
            <person name="Chen Y."/>
            <person name="Clarke G."/>
            <person name="Clark S.Y."/>
            <person name="Clee C.M."/>
            <person name="Clegg S."/>
            <person name="Collier R.E."/>
            <person name="Corby N."/>
            <person name="Crosier M."/>
            <person name="Cummings A.T."/>
            <person name="Davies J."/>
            <person name="Dhami P."/>
            <person name="Dunn M."/>
            <person name="Dutta I."/>
            <person name="Dyer L.W."/>
            <person name="Earthrowl M.E."/>
            <person name="Faulkner L."/>
            <person name="Fleming C.J."/>
            <person name="Frankish A."/>
            <person name="Frankland J.A."/>
            <person name="French L."/>
            <person name="Fricker D.G."/>
            <person name="Garner P."/>
            <person name="Garnett J."/>
            <person name="Ghori J."/>
            <person name="Gilbert J.G.R."/>
            <person name="Glison C."/>
            <person name="Grafham D.V."/>
            <person name="Gribble S."/>
            <person name="Griffiths C."/>
            <person name="Griffiths-Jones S."/>
            <person name="Grocock R."/>
            <person name="Guy J."/>
            <person name="Hall R.E."/>
            <person name="Hammond S."/>
            <person name="Harley J.L."/>
            <person name="Harrison E.S.I."/>
            <person name="Hart E.A."/>
            <person name="Heath P.D."/>
            <person name="Henderson C.D."/>
            <person name="Hopkins B.L."/>
            <person name="Howard P.J."/>
            <person name="Howden P.J."/>
            <person name="Huckle E."/>
            <person name="Johnson C."/>
            <person name="Johnson D."/>
            <person name="Joy A.A."/>
            <person name="Kay M."/>
            <person name="Keenan S."/>
            <person name="Kershaw J.K."/>
            <person name="Kimberley A.M."/>
            <person name="King A."/>
            <person name="Knights A."/>
            <person name="Laird G.K."/>
            <person name="Langford C."/>
            <person name="Lawlor S."/>
            <person name="Leongamornlert D.A."/>
            <person name="Leversha M."/>
            <person name="Lloyd C."/>
            <person name="Lloyd D.M."/>
            <person name="Lovell J."/>
            <person name="Martin S."/>
            <person name="Mashreghi-Mohammadi M."/>
            <person name="Matthews L."/>
            <person name="McLaren S."/>
            <person name="McLay K.E."/>
            <person name="McMurray A."/>
            <person name="Milne S."/>
            <person name="Nickerson T."/>
            <person name="Nisbett J."/>
            <person name="Nordsiek G."/>
            <person name="Pearce A.V."/>
            <person name="Peck A.I."/>
            <person name="Porter K.M."/>
            <person name="Pandian R."/>
            <person name="Pelan S."/>
            <person name="Phillimore B."/>
            <person name="Povey S."/>
            <person name="Ramsey Y."/>
            <person name="Rand V."/>
            <person name="Scharfe M."/>
            <person name="Sehra H.K."/>
            <person name="Shownkeen R."/>
            <person name="Sims S.K."/>
            <person name="Skuce C.D."/>
            <person name="Smith M."/>
            <person name="Steward C.A."/>
            <person name="Swarbreck D."/>
            <person name="Sycamore N."/>
            <person name="Tester J."/>
            <person name="Thorpe A."/>
            <person name="Tracey A."/>
            <person name="Tromans A."/>
            <person name="Thomas D.W."/>
            <person name="Wall M."/>
            <person name="Wallis J.M."/>
            <person name="West A.P."/>
            <person name="Whitehead S.L."/>
            <person name="Willey D.L."/>
            <person name="Williams S.A."/>
            <person name="Wilming L."/>
            <person name="Wray P.W."/>
            <person name="Young L."/>
            <person name="Ashurst J.L."/>
            <person name="Coulson A."/>
            <person name="Blocker H."/>
            <person name="Durbin R.M."/>
            <person name="Sulston J.E."/>
            <person name="Hubbard T."/>
            <person name="Jackson M.J."/>
            <person name="Bentley D.R."/>
            <person name="Beck S."/>
            <person name="Rogers J."/>
            <person name="Dunham I."/>
        </authorList>
    </citation>
    <scope>NUCLEOTIDE SEQUENCE [LARGE SCALE GENOMIC DNA]</scope>
</reference>
<feature type="chain" id="PRO_0000089703" description="Uncharacterized protein DOCK8-AS1">
    <location>
        <begin position="1"/>
        <end position="295"/>
    </location>
</feature>
<feature type="region of interest" description="Disordered" evidence="1">
    <location>
        <begin position="1"/>
        <end position="111"/>
    </location>
</feature>
<feature type="region of interest" description="Disordered" evidence="1">
    <location>
        <begin position="183"/>
        <end position="295"/>
    </location>
</feature>
<feature type="compositionally biased region" description="Basic residues" evidence="1">
    <location>
        <begin position="1"/>
        <end position="13"/>
    </location>
</feature>
<feature type="compositionally biased region" description="Low complexity" evidence="1">
    <location>
        <begin position="57"/>
        <end position="67"/>
    </location>
</feature>
<feature type="compositionally biased region" description="Pro residues" evidence="1">
    <location>
        <begin position="68"/>
        <end position="77"/>
    </location>
</feature>
<feature type="compositionally biased region" description="Basic and acidic residues" evidence="1">
    <location>
        <begin position="245"/>
        <end position="257"/>
    </location>
</feature>
<feature type="compositionally biased region" description="Basic and acidic residues" evidence="1">
    <location>
        <begin position="280"/>
        <end position="295"/>
    </location>
</feature>
<feature type="sequence variant" id="VAR_050824" description="In dbSNP:rs636922.">
    <original>L</original>
    <variation>R</variation>
    <location>
        <position position="43"/>
    </location>
</feature>
<feature type="sequence variant" id="VAR_050825" description="In dbSNP:rs2236547.">
    <original>R</original>
    <variation>Q</variation>
    <location>
        <position position="178"/>
    </location>
</feature>
<feature type="sequence variant" id="VAR_050826" description="In dbSNP:rs540473.">
    <original>R</original>
    <variation>G</variation>
    <location>
        <position position="231"/>
    </location>
</feature>
<feature type="sequence conflict" description="In Ref. 1; BAB70995." evidence="2" ref="1">
    <original>D</original>
    <variation>G</variation>
    <location>
        <position position="55"/>
    </location>
</feature>
<sequence>MRHSVARPTRLPRRLSPFWDPATCKNLEGGAGEVVRGRDPRRLRTSRSTEILGEDLAGPSAGAAARPAAPPPQPREPGAPGLRRAPPRTRMDSSGLGPCSEAPLHTSAGLSGRNLRAAGGVLPVDLERERAALCARQSGHGPPAVRWLLGSRGAESGGLARRRVAAEHAQPSANLVCRSALETSAFPPSKPKSPRGRVRARSSDGRLRHPAWRAGSGGRGGRGPSAELASRYWGRRRALPGAADLRPKGARADDRRPLRAGRKLHLPEAARLPGNVGKSGEPHKAGEVGNHPRDS</sequence>
<gene>
    <name evidence="3" type="primary">DOCK8-AS1</name>
    <name type="synonym">C9orf66</name>
</gene>
<accession>Q5T8R8</accession>
<accession>Q96NB0</accession>
<proteinExistence type="uncertain"/>
<name>DOAS1_HUMAN</name>
<keyword id="KW-1267">Proteomics identification</keyword>
<keyword id="KW-1185">Reference proteome</keyword>
<comment type="caution">
    <text evidence="2">Product of a dubious CDS prediction.</text>
</comment>
<organism>
    <name type="scientific">Homo sapiens</name>
    <name type="common">Human</name>
    <dbReference type="NCBI Taxonomy" id="9606"/>
    <lineage>
        <taxon>Eukaryota</taxon>
        <taxon>Metazoa</taxon>
        <taxon>Chordata</taxon>
        <taxon>Craniata</taxon>
        <taxon>Vertebrata</taxon>
        <taxon>Euteleostomi</taxon>
        <taxon>Mammalia</taxon>
        <taxon>Eutheria</taxon>
        <taxon>Euarchontoglires</taxon>
        <taxon>Primates</taxon>
        <taxon>Haplorrhini</taxon>
        <taxon>Catarrhini</taxon>
        <taxon>Hominidae</taxon>
        <taxon>Homo</taxon>
    </lineage>
</organism>
<dbReference type="EMBL" id="AK055720">
    <property type="protein sequence ID" value="BAB70995.1"/>
    <property type="molecule type" value="mRNA"/>
</dbReference>
<dbReference type="EMBL" id="AL158832">
    <property type="status" value="NOT_ANNOTATED_CDS"/>
    <property type="molecule type" value="Genomic_DNA"/>
</dbReference>
<dbReference type="RefSeq" id="NP_689782.2">
    <property type="nucleotide sequence ID" value="NM_152569.2"/>
</dbReference>
<dbReference type="iPTMnet" id="Q5T8R8"/>
<dbReference type="PhosphoSitePlus" id="Q5T8R8"/>
<dbReference type="BioMuta" id="C9orf66"/>
<dbReference type="DMDM" id="71152410"/>
<dbReference type="MassIVE" id="Q5T8R8"/>
<dbReference type="PaxDb" id="9606-ENSP00000371824"/>
<dbReference type="UCSC" id="uc003zge.5">
    <property type="organism name" value="human"/>
</dbReference>
<dbReference type="AGR" id="HGNC:26436"/>
<dbReference type="GeneCards" id="DOCK8-AS1"/>
<dbReference type="HGNC" id="HGNC:26436">
    <property type="gene designation" value="DOCK8-AS1"/>
</dbReference>
<dbReference type="MalaCards" id="DOCK8-AS1"/>
<dbReference type="neXtProt" id="NX_Q5T8R8"/>
<dbReference type="eggNOG" id="ENOG502TM25">
    <property type="taxonomic scope" value="Eukaryota"/>
</dbReference>
<dbReference type="HOGENOM" id="CLU_943216_0_0_1"/>
<dbReference type="InParanoid" id="Q5T8R8"/>
<dbReference type="PAN-GO" id="Q5T8R8">
    <property type="GO annotations" value="0 GO annotations based on evolutionary models"/>
</dbReference>
<dbReference type="PathwayCommons" id="Q5T8R8"/>
<dbReference type="BioGRID-ORCS" id="157983">
    <property type="hits" value="8 hits in 1132 CRISPR screens"/>
</dbReference>
<dbReference type="GenomeRNAi" id="157983"/>
<dbReference type="Pharos" id="Q5T8R8">
    <property type="development level" value="Tdark"/>
</dbReference>
<dbReference type="Proteomes" id="UP000005640">
    <property type="component" value="Unplaced"/>
</dbReference>
<dbReference type="RNAct" id="Q5T8R8">
    <property type="molecule type" value="protein"/>
</dbReference>
<dbReference type="InterPro" id="IPR040791">
    <property type="entry name" value="DUF5555"/>
</dbReference>
<dbReference type="Pfam" id="PF17710">
    <property type="entry name" value="DUF5555"/>
    <property type="match status" value="1"/>
</dbReference>
<protein>
    <recommendedName>
        <fullName>Uncharacterized protein DOCK8-AS1</fullName>
    </recommendedName>
    <alternativeName>
        <fullName evidence="3">DOCK8 antisense RNA 1</fullName>
    </alternativeName>
</protein>